<comment type="function">
    <text evidence="1">Can catalyze the hydrolysis of ATP in the presence of single-stranded DNA, the ATP-dependent uptake of single-stranded DNA by duplex DNA, and the ATP-dependent hybridization of homologous single-stranded DNAs. It interacts with LexA causing its activation and leading to its autocatalytic cleavage.</text>
</comment>
<comment type="subcellular location">
    <subcellularLocation>
        <location evidence="1">Cytoplasm</location>
    </subcellularLocation>
</comment>
<comment type="similarity">
    <text evidence="1">Belongs to the RecA family.</text>
</comment>
<reference key="1">
    <citation type="journal article" date="2004" name="Genome Res.">
        <title>The complete genome and proteome of Mycoplasma mobile.</title>
        <authorList>
            <person name="Jaffe J.D."/>
            <person name="Stange-Thomann N."/>
            <person name="Smith C."/>
            <person name="DeCaprio D."/>
            <person name="Fisher S."/>
            <person name="Butler J."/>
            <person name="Calvo S."/>
            <person name="Elkins T."/>
            <person name="FitzGerald M.G."/>
            <person name="Hafez N."/>
            <person name="Kodira C.D."/>
            <person name="Major J."/>
            <person name="Wang S."/>
            <person name="Wilkinson J."/>
            <person name="Nicol R."/>
            <person name="Nusbaum C."/>
            <person name="Birren B."/>
            <person name="Berg H.C."/>
            <person name="Church G.M."/>
        </authorList>
    </citation>
    <scope>NUCLEOTIDE SEQUENCE [LARGE SCALE GENOMIC DNA]</scope>
    <source>
        <strain>ATCC 43663 / NCTC 11711 / 163 K</strain>
    </source>
</reference>
<keyword id="KW-0067">ATP-binding</keyword>
<keyword id="KW-0963">Cytoplasm</keyword>
<keyword id="KW-0227">DNA damage</keyword>
<keyword id="KW-0233">DNA recombination</keyword>
<keyword id="KW-0234">DNA repair</keyword>
<keyword id="KW-0238">DNA-binding</keyword>
<keyword id="KW-0547">Nucleotide-binding</keyword>
<keyword id="KW-1185">Reference proteome</keyword>
<keyword id="KW-0742">SOS response</keyword>
<dbReference type="EMBL" id="AE017308">
    <property type="protein sequence ID" value="AAT28001.1"/>
    <property type="molecule type" value="Genomic_DNA"/>
</dbReference>
<dbReference type="RefSeq" id="WP_011265035.1">
    <property type="nucleotide sequence ID" value="NC_006908.1"/>
</dbReference>
<dbReference type="SMR" id="Q6KHC9"/>
<dbReference type="STRING" id="267748.MMOB5150"/>
<dbReference type="KEGG" id="mmo:MMOB5150"/>
<dbReference type="eggNOG" id="COG0468">
    <property type="taxonomic scope" value="Bacteria"/>
</dbReference>
<dbReference type="HOGENOM" id="CLU_040469_1_2_14"/>
<dbReference type="OrthoDB" id="9776733at2"/>
<dbReference type="Proteomes" id="UP000009072">
    <property type="component" value="Chromosome"/>
</dbReference>
<dbReference type="GO" id="GO:0005829">
    <property type="term" value="C:cytosol"/>
    <property type="evidence" value="ECO:0007669"/>
    <property type="project" value="TreeGrafter"/>
</dbReference>
<dbReference type="GO" id="GO:0005524">
    <property type="term" value="F:ATP binding"/>
    <property type="evidence" value="ECO:0007669"/>
    <property type="project" value="UniProtKB-UniRule"/>
</dbReference>
<dbReference type="GO" id="GO:0016887">
    <property type="term" value="F:ATP hydrolysis activity"/>
    <property type="evidence" value="ECO:0007669"/>
    <property type="project" value="InterPro"/>
</dbReference>
<dbReference type="GO" id="GO:0140664">
    <property type="term" value="F:ATP-dependent DNA damage sensor activity"/>
    <property type="evidence" value="ECO:0007669"/>
    <property type="project" value="InterPro"/>
</dbReference>
<dbReference type="GO" id="GO:0003684">
    <property type="term" value="F:damaged DNA binding"/>
    <property type="evidence" value="ECO:0007669"/>
    <property type="project" value="UniProtKB-UniRule"/>
</dbReference>
<dbReference type="GO" id="GO:0003697">
    <property type="term" value="F:single-stranded DNA binding"/>
    <property type="evidence" value="ECO:0007669"/>
    <property type="project" value="UniProtKB-UniRule"/>
</dbReference>
<dbReference type="GO" id="GO:0006310">
    <property type="term" value="P:DNA recombination"/>
    <property type="evidence" value="ECO:0007669"/>
    <property type="project" value="UniProtKB-UniRule"/>
</dbReference>
<dbReference type="GO" id="GO:0006281">
    <property type="term" value="P:DNA repair"/>
    <property type="evidence" value="ECO:0007669"/>
    <property type="project" value="UniProtKB-UniRule"/>
</dbReference>
<dbReference type="GO" id="GO:0009432">
    <property type="term" value="P:SOS response"/>
    <property type="evidence" value="ECO:0007669"/>
    <property type="project" value="UniProtKB-UniRule"/>
</dbReference>
<dbReference type="CDD" id="cd00983">
    <property type="entry name" value="RecA"/>
    <property type="match status" value="1"/>
</dbReference>
<dbReference type="FunFam" id="3.40.50.300:FF:000087">
    <property type="entry name" value="Recombinase RecA"/>
    <property type="match status" value="1"/>
</dbReference>
<dbReference type="Gene3D" id="3.40.50.300">
    <property type="entry name" value="P-loop containing nucleotide triphosphate hydrolases"/>
    <property type="match status" value="1"/>
</dbReference>
<dbReference type="HAMAP" id="MF_00268">
    <property type="entry name" value="RecA"/>
    <property type="match status" value="1"/>
</dbReference>
<dbReference type="InterPro" id="IPR003593">
    <property type="entry name" value="AAA+_ATPase"/>
</dbReference>
<dbReference type="InterPro" id="IPR013765">
    <property type="entry name" value="DNA_recomb/repair_RecA"/>
</dbReference>
<dbReference type="InterPro" id="IPR020584">
    <property type="entry name" value="DNA_recomb/repair_RecA_CS"/>
</dbReference>
<dbReference type="InterPro" id="IPR027417">
    <property type="entry name" value="P-loop_NTPase"/>
</dbReference>
<dbReference type="InterPro" id="IPR049261">
    <property type="entry name" value="RecA-like_C"/>
</dbReference>
<dbReference type="InterPro" id="IPR049428">
    <property type="entry name" value="RecA-like_N"/>
</dbReference>
<dbReference type="InterPro" id="IPR020588">
    <property type="entry name" value="RecA_ATP-bd"/>
</dbReference>
<dbReference type="InterPro" id="IPR023400">
    <property type="entry name" value="RecA_C_sf"/>
</dbReference>
<dbReference type="InterPro" id="IPR020587">
    <property type="entry name" value="RecA_monomer-monomer_interface"/>
</dbReference>
<dbReference type="NCBIfam" id="TIGR02012">
    <property type="entry name" value="tigrfam_recA"/>
    <property type="match status" value="1"/>
</dbReference>
<dbReference type="PANTHER" id="PTHR45900:SF1">
    <property type="entry name" value="MITOCHONDRIAL DNA REPAIR PROTEIN RECA HOMOLOG-RELATED"/>
    <property type="match status" value="1"/>
</dbReference>
<dbReference type="PANTHER" id="PTHR45900">
    <property type="entry name" value="RECA"/>
    <property type="match status" value="1"/>
</dbReference>
<dbReference type="Pfam" id="PF00154">
    <property type="entry name" value="RecA"/>
    <property type="match status" value="1"/>
</dbReference>
<dbReference type="Pfam" id="PF21096">
    <property type="entry name" value="RecA_C"/>
    <property type="match status" value="1"/>
</dbReference>
<dbReference type="PRINTS" id="PR00142">
    <property type="entry name" value="RECA"/>
</dbReference>
<dbReference type="SMART" id="SM00382">
    <property type="entry name" value="AAA"/>
    <property type="match status" value="1"/>
</dbReference>
<dbReference type="SUPFAM" id="SSF52540">
    <property type="entry name" value="P-loop containing nucleoside triphosphate hydrolases"/>
    <property type="match status" value="1"/>
</dbReference>
<dbReference type="SUPFAM" id="SSF54752">
    <property type="entry name" value="RecA protein, C-terminal domain"/>
    <property type="match status" value="1"/>
</dbReference>
<dbReference type="PROSITE" id="PS00321">
    <property type="entry name" value="RECA_1"/>
    <property type="match status" value="1"/>
</dbReference>
<dbReference type="PROSITE" id="PS50162">
    <property type="entry name" value="RECA_2"/>
    <property type="match status" value="1"/>
</dbReference>
<dbReference type="PROSITE" id="PS50163">
    <property type="entry name" value="RECA_3"/>
    <property type="match status" value="1"/>
</dbReference>
<evidence type="ECO:0000255" key="1">
    <source>
        <dbReference type="HAMAP-Rule" id="MF_00268"/>
    </source>
</evidence>
<organism>
    <name type="scientific">Mycoplasma mobile (strain ATCC 43663 / 163K / NCTC 11711)</name>
    <name type="common">Mesomycoplasma mobile</name>
    <dbReference type="NCBI Taxonomy" id="267748"/>
    <lineage>
        <taxon>Bacteria</taxon>
        <taxon>Bacillati</taxon>
        <taxon>Mycoplasmatota</taxon>
        <taxon>Mycoplasmoidales</taxon>
        <taxon>Metamycoplasmataceae</taxon>
        <taxon>Mesomycoplasma</taxon>
    </lineage>
</organism>
<protein>
    <recommendedName>
        <fullName evidence="1">Protein RecA</fullName>
    </recommendedName>
    <alternativeName>
        <fullName evidence="1">Recombinase A</fullName>
    </alternativeName>
</protein>
<feature type="chain" id="PRO_0000122760" description="Protein RecA">
    <location>
        <begin position="1"/>
        <end position="331"/>
    </location>
</feature>
<feature type="binding site" evidence="1">
    <location>
        <begin position="61"/>
        <end position="68"/>
    </location>
    <ligand>
        <name>ATP</name>
        <dbReference type="ChEBI" id="CHEBI:30616"/>
    </ligand>
</feature>
<sequence length="331" mass="36107">MEKEIKNILMEIEKKFGKESIMLLGSKQDLNVEIFSTGSLAIDHALGINGFPKGRIIEIYGPESSGKTTIALHAIAEIQKSGGVAAFIDAEHSIDPNYAKNLGVNIDNLILSQPDSGEQALEIVDILAKSSSIDLIVVDSVAALVPEVELNGEMKDQVMGAQARLMSKALRKITGSLNKSKTTVIFINQIREKIGTFFGNPETTPGGRALKFYSSIRLDVRKVSSVSTGEVISGNNIKIKVVKNKLSAPFKEAFTEIVFSKGISKISEAVEFAENLKIITRKGAWFYYNDQNIAQGKSNLKDLLEKNEALYSEILTKVISALSKENVNSIL</sequence>
<name>RECA_MYCM1</name>
<gene>
    <name evidence="1" type="primary">recA</name>
    <name type="ordered locus">MMOB5150</name>
</gene>
<accession>Q6KHC9</accession>
<proteinExistence type="inferred from homology"/>